<dbReference type="EMBL" id="AF074718">
    <property type="protein sequence ID" value="AAC98094.1"/>
    <property type="molecule type" value="mRNA"/>
</dbReference>
<dbReference type="EMBL" id="AF073523">
    <property type="protein sequence ID" value="AAC95465.1"/>
    <property type="molecule type" value="mRNA"/>
</dbReference>
<dbReference type="EMBL" id="AF076842">
    <property type="protein sequence ID" value="AAC95524.1"/>
    <property type="molecule type" value="mRNA"/>
</dbReference>
<dbReference type="EMBL" id="AJ004976">
    <property type="protein sequence ID" value="CAA06250.1"/>
    <property type="molecule type" value="mRNA"/>
</dbReference>
<dbReference type="EMBL" id="AF038841">
    <property type="protein sequence ID" value="AAC27248.1"/>
    <property type="molecule type" value="mRNA"/>
</dbReference>
<dbReference type="EMBL" id="AF058394">
    <property type="protein sequence ID" value="AAC14139.1"/>
    <property type="molecule type" value="mRNA"/>
</dbReference>
<dbReference type="EMBL" id="AF084514">
    <property type="protein sequence ID" value="AAC35551.1"/>
    <property type="molecule type" value="mRNA"/>
</dbReference>
<dbReference type="EMBL" id="AK146533">
    <property type="protein sequence ID" value="BAE27240.1"/>
    <property type="molecule type" value="mRNA"/>
</dbReference>
<dbReference type="EMBL" id="AK148098">
    <property type="protein sequence ID" value="BAE28343.1"/>
    <property type="molecule type" value="mRNA"/>
</dbReference>
<dbReference type="EMBL" id="AK150466">
    <property type="protein sequence ID" value="BAE29583.1"/>
    <property type="molecule type" value="mRNA"/>
</dbReference>
<dbReference type="EMBL" id="AK168588">
    <property type="protein sequence ID" value="BAE40457.1"/>
    <property type="molecule type" value="mRNA"/>
</dbReference>
<dbReference type="EMBL" id="BC048693">
    <property type="protein sequence ID" value="AAH48693.1"/>
    <property type="molecule type" value="mRNA"/>
</dbReference>
<dbReference type="CCDS" id="CCDS27379.1">
    <molecule id="Q9QWZ1-1"/>
</dbReference>
<dbReference type="CCDS" id="CCDS70618.1">
    <molecule id="Q9QWZ1-2"/>
</dbReference>
<dbReference type="RefSeq" id="NP_001276376.1">
    <molecule id="Q9QWZ1-1"/>
    <property type="nucleotide sequence ID" value="NM_001289447.2"/>
</dbReference>
<dbReference type="RefSeq" id="NP_001276377.1">
    <molecule id="Q9QWZ1-2"/>
    <property type="nucleotide sequence ID" value="NM_001289448.1"/>
</dbReference>
<dbReference type="RefSeq" id="NP_001398639.1">
    <molecule id="Q9QWZ1-1"/>
    <property type="nucleotide sequence ID" value="NM_001411710.1"/>
</dbReference>
<dbReference type="RefSeq" id="NP_035362.2">
    <molecule id="Q9QWZ1-1"/>
    <property type="nucleotide sequence ID" value="NM_011232.4"/>
</dbReference>
<dbReference type="SMR" id="Q9QWZ1"/>
<dbReference type="FunCoup" id="Q9QWZ1">
    <property type="interactions" value="4059"/>
</dbReference>
<dbReference type="STRING" id="10090.ENSMUSP00000022856"/>
<dbReference type="GlyGen" id="Q9QWZ1">
    <property type="glycosylation" value="2 sites, 1 O-linked glycan (1 site)"/>
</dbReference>
<dbReference type="iPTMnet" id="Q9QWZ1"/>
<dbReference type="PhosphoSitePlus" id="Q9QWZ1"/>
<dbReference type="PaxDb" id="10090-ENSMUSP00000022856"/>
<dbReference type="PeptideAtlas" id="Q9QWZ1"/>
<dbReference type="ProteomicsDB" id="255022">
    <molecule id="Q9QWZ1-1"/>
</dbReference>
<dbReference type="ProteomicsDB" id="255023">
    <molecule id="Q9QWZ1-2"/>
</dbReference>
<dbReference type="Pumba" id="Q9QWZ1"/>
<dbReference type="Antibodypedia" id="10031">
    <property type="antibodies" value="354 antibodies from 33 providers"/>
</dbReference>
<dbReference type="DNASU" id="19355"/>
<dbReference type="Ensembl" id="ENSMUST00000022856.15">
    <molecule id="Q9QWZ1-1"/>
    <property type="protein sequence ID" value="ENSMUSP00000022856.9"/>
    <property type="gene ID" value="ENSMUSG00000022248.15"/>
</dbReference>
<dbReference type="Ensembl" id="ENSMUST00000100775.10">
    <molecule id="Q9QWZ1-2"/>
    <property type="protein sequence ID" value="ENSMUSP00000098338.4"/>
    <property type="gene ID" value="ENSMUSG00000022248.15"/>
</dbReference>
<dbReference type="GeneID" id="19355"/>
<dbReference type="KEGG" id="mmu:19355"/>
<dbReference type="UCSC" id="uc007vgh.2">
    <molecule id="Q9QWZ1-1"/>
    <property type="organism name" value="mouse"/>
</dbReference>
<dbReference type="UCSC" id="uc033gtc.1">
    <molecule id="Q9QWZ1-2"/>
    <property type="organism name" value="mouse"/>
</dbReference>
<dbReference type="AGR" id="MGI:1316678"/>
<dbReference type="CTD" id="5810"/>
<dbReference type="MGI" id="MGI:1316678">
    <property type="gene designation" value="Rad1"/>
</dbReference>
<dbReference type="VEuPathDB" id="HostDB:ENSMUSG00000022248"/>
<dbReference type="eggNOG" id="KOG3194">
    <property type="taxonomic scope" value="Eukaryota"/>
</dbReference>
<dbReference type="GeneTree" id="ENSGT00500000044913"/>
<dbReference type="HOGENOM" id="CLU_035332_2_0_1"/>
<dbReference type="InParanoid" id="Q9QWZ1"/>
<dbReference type="OMA" id="WSQAYKF"/>
<dbReference type="OrthoDB" id="337581at2759"/>
<dbReference type="PhylomeDB" id="Q9QWZ1"/>
<dbReference type="TreeFam" id="TF101211"/>
<dbReference type="Reactome" id="R-MMU-176187">
    <property type="pathway name" value="Activation of ATR in response to replication stress"/>
</dbReference>
<dbReference type="Reactome" id="R-MMU-5685938">
    <property type="pathway name" value="HDR through Single Strand Annealing (SSA)"/>
</dbReference>
<dbReference type="Reactome" id="R-MMU-5693607">
    <property type="pathway name" value="Processing of DNA double-strand break ends"/>
</dbReference>
<dbReference type="Reactome" id="R-MMU-6804756">
    <property type="pathway name" value="Regulation of TP53 Activity through Phosphorylation"/>
</dbReference>
<dbReference type="Reactome" id="R-MMU-69473">
    <property type="pathway name" value="G2/M DNA damage checkpoint"/>
</dbReference>
<dbReference type="BioGRID-ORCS" id="19355">
    <property type="hits" value="27 hits in 115 CRISPR screens"/>
</dbReference>
<dbReference type="ChiTaRS" id="Rad1">
    <property type="organism name" value="mouse"/>
</dbReference>
<dbReference type="PRO" id="PR:Q9QWZ1"/>
<dbReference type="Proteomes" id="UP000000589">
    <property type="component" value="Chromosome 15"/>
</dbReference>
<dbReference type="RNAct" id="Q9QWZ1">
    <property type="molecule type" value="protein"/>
</dbReference>
<dbReference type="Bgee" id="ENSMUSG00000022248">
    <property type="expression patterns" value="Expressed in epiblast cell in embryo and 244 other cell types or tissues"/>
</dbReference>
<dbReference type="ExpressionAtlas" id="Q9QWZ1">
    <property type="expression patterns" value="baseline and differential"/>
</dbReference>
<dbReference type="GO" id="GO:0030896">
    <property type="term" value="C:checkpoint clamp complex"/>
    <property type="evidence" value="ECO:0007669"/>
    <property type="project" value="Ensembl"/>
</dbReference>
<dbReference type="GO" id="GO:0005654">
    <property type="term" value="C:nucleoplasm"/>
    <property type="evidence" value="ECO:0007669"/>
    <property type="project" value="Ensembl"/>
</dbReference>
<dbReference type="GO" id="GO:0008311">
    <property type="term" value="F:double-stranded DNA 3'-5' DNA exonuclease activity"/>
    <property type="evidence" value="ECO:0007669"/>
    <property type="project" value="UniProtKB-EC"/>
</dbReference>
<dbReference type="GO" id="GO:0071479">
    <property type="term" value="P:cellular response to ionizing radiation"/>
    <property type="evidence" value="ECO:0007669"/>
    <property type="project" value="Ensembl"/>
</dbReference>
<dbReference type="GO" id="GO:0000077">
    <property type="term" value="P:DNA damage checkpoint signaling"/>
    <property type="evidence" value="ECO:0007669"/>
    <property type="project" value="Ensembl"/>
</dbReference>
<dbReference type="GO" id="GO:0006281">
    <property type="term" value="P:DNA repair"/>
    <property type="evidence" value="ECO:0007669"/>
    <property type="project" value="UniProtKB-KW"/>
</dbReference>
<dbReference type="GO" id="GO:0051598">
    <property type="term" value="P:meiotic recombination checkpoint signaling"/>
    <property type="evidence" value="ECO:0007669"/>
    <property type="project" value="Ensembl"/>
</dbReference>
<dbReference type="CDD" id="cd00577">
    <property type="entry name" value="PCNA"/>
    <property type="match status" value="1"/>
</dbReference>
<dbReference type="FunFam" id="3.70.10.10:FF:000004">
    <property type="entry name" value="Cell cycle checkpoint protein RAD1"/>
    <property type="match status" value="1"/>
</dbReference>
<dbReference type="Gene3D" id="3.70.10.10">
    <property type="match status" value="1"/>
</dbReference>
<dbReference type="InterPro" id="IPR003011">
    <property type="entry name" value="Cell_cycle_checkpoint_Rad1"/>
</dbReference>
<dbReference type="InterPro" id="IPR046938">
    <property type="entry name" value="DNA_clamp_sf"/>
</dbReference>
<dbReference type="InterPro" id="IPR003021">
    <property type="entry name" value="Rad1_Rec1_Rad17"/>
</dbReference>
<dbReference type="PANTHER" id="PTHR10870">
    <property type="entry name" value="CELL CYCLE CHECKPOINT PROTEIN RAD1"/>
    <property type="match status" value="1"/>
</dbReference>
<dbReference type="PANTHER" id="PTHR10870:SF0">
    <property type="entry name" value="CELL CYCLE CHECKPOINT PROTEIN RAD1"/>
    <property type="match status" value="1"/>
</dbReference>
<dbReference type="Pfam" id="PF02144">
    <property type="entry name" value="Rad1"/>
    <property type="match status" value="1"/>
</dbReference>
<dbReference type="PRINTS" id="PR01245">
    <property type="entry name" value="RAD1REC1"/>
</dbReference>
<dbReference type="PRINTS" id="PR01246">
    <property type="entry name" value="RAD1REPAIR"/>
</dbReference>
<dbReference type="SUPFAM" id="SSF55979">
    <property type="entry name" value="DNA clamp"/>
    <property type="match status" value="1"/>
</dbReference>
<feature type="chain" id="PRO_0000225006" description="Cell cycle checkpoint protein RAD1">
    <location>
        <begin position="1"/>
        <end position="280"/>
    </location>
</feature>
<feature type="splice variant" id="VSP_017337" description="In isoform 2." evidence="5">
    <original>YKLSLLKPSTKALALSCKVSIRTDNRGFLSLQYMIRNEDGQICFVEYYCCPDEEVPES</original>
    <variation>ISDVKYSCKTWLQLPEGVGYDPLSGLEWTLSERDGEQEVAQWVNVVPVQA</variation>
    <location>
        <begin position="223"/>
        <end position="280"/>
    </location>
</feature>
<feature type="sequence conflict" description="In Ref. 3, 4, 6 and 7." evidence="6" ref="3 4 6 7">
    <original>S</original>
    <variation>F</variation>
    <location>
        <position position="28"/>
    </location>
</feature>
<feature type="sequence conflict" description="In Ref. 8; BAE28343." evidence="6" ref="8">
    <original>Q</original>
    <variation>E</variation>
    <location>
        <position position="71"/>
    </location>
</feature>
<feature type="sequence conflict" description="In Ref. 8; BAE40457." evidence="6" ref="8">
    <original>P</original>
    <variation>T</variation>
    <location>
        <position position="118"/>
    </location>
</feature>
<feature type="sequence conflict" description="In Ref. 2; AAC95465." evidence="6" ref="2">
    <original>N</original>
    <variation>S</variation>
    <location>
        <position position="198"/>
    </location>
</feature>
<feature type="sequence conflict" description="In Ref. 5; AAC27248." evidence="6" ref="5">
    <original>D</original>
    <variation>N</variation>
    <location>
        <position position="216"/>
    </location>
</feature>
<organism>
    <name type="scientific">Mus musculus</name>
    <name type="common">Mouse</name>
    <dbReference type="NCBI Taxonomy" id="10090"/>
    <lineage>
        <taxon>Eukaryota</taxon>
        <taxon>Metazoa</taxon>
        <taxon>Chordata</taxon>
        <taxon>Craniata</taxon>
        <taxon>Vertebrata</taxon>
        <taxon>Euteleostomi</taxon>
        <taxon>Mammalia</taxon>
        <taxon>Eutheria</taxon>
        <taxon>Euarchontoglires</taxon>
        <taxon>Glires</taxon>
        <taxon>Rodentia</taxon>
        <taxon>Myomorpha</taxon>
        <taxon>Muroidea</taxon>
        <taxon>Muridae</taxon>
        <taxon>Murinae</taxon>
        <taxon>Mus</taxon>
        <taxon>Mus</taxon>
    </lineage>
</organism>
<sequence>MPLLTQYNEEEYEQYCLVASLDNVRNLSTVLKAIHFREHATCFATKNGIKVTVENAKCVQANAFIQADVFQEFVIQEESVTFRINLTILLDCLSIFGSSPTPGTLTALRMCYQGYGHPLMLFLEEGGVVTVCKITTQEPEETLDFDFCSTNVMNKIILQSEGLREAFSELDMTGDVLQITVSPDKPYFRLSTFGNAGNSHLDYPKDSDLVEAFHCDKTQVNRYKLSLLKPSTKALALSCKVSIRTDNRGFLSLQYMIRNEDGQICFVEYYCCPDEEVPES</sequence>
<keyword id="KW-0025">Alternative splicing</keyword>
<keyword id="KW-0227">DNA damage</keyword>
<keyword id="KW-0234">DNA repair</keyword>
<keyword id="KW-0539">Nucleus</keyword>
<keyword id="KW-1185">Reference proteome</keyword>
<name>RAD1_MOUSE</name>
<protein>
    <recommendedName>
        <fullName>Cell cycle checkpoint protein RAD1</fullName>
        <shortName>mRAD1</shortName>
    </recommendedName>
    <alternativeName>
        <fullName>Rad1-like DNA damage checkpoint protein</fullName>
    </alternativeName>
</protein>
<evidence type="ECO:0000250" key="1">
    <source>
        <dbReference type="UniProtKB" id="O60671"/>
    </source>
</evidence>
<evidence type="ECO:0000269" key="2">
    <source>
    </source>
</evidence>
<evidence type="ECO:0000269" key="3">
    <source>
    </source>
</evidence>
<evidence type="ECO:0000269" key="4">
    <source>
    </source>
</evidence>
<evidence type="ECO:0000303" key="5">
    <source>
    </source>
</evidence>
<evidence type="ECO:0000305" key="6"/>
<reference key="1">
    <citation type="journal article" date="1998" name="Genes Dev.">
        <title>Human and mouse homologs of Schizosaccharomyces pombe rad1(+) and Saccharomyces cerevisiae RAD17: linkage to checkpoint control and mammalian meiosis.</title>
        <authorList>
            <person name="Freire R."/>
            <person name="Murguia J.R."/>
            <person name="Tarsounas M."/>
            <person name="Lowndes N.F."/>
            <person name="Moens P.B."/>
            <person name="Jackson S.P."/>
        </authorList>
    </citation>
    <scope>NUCLEOTIDE SEQUENCE [MRNA] (ISOFORM 1)</scope>
    <scope>TISSUE SPECIFICITY</scope>
</reference>
<reference key="2">
    <citation type="journal article" date="1998" name="Genomics">
        <title>A human and mouse homolog of the Schizosaccharomyces pombe rad1+ cell cycle checkpoint control gene.</title>
        <authorList>
            <person name="Bluyssen H.A.R."/>
            <person name="van Os R.I."/>
            <person name="Naus N.C."/>
            <person name="Jaspers I."/>
            <person name="Hoeijmakers J.H.J."/>
            <person name="de Klein A."/>
        </authorList>
    </citation>
    <scope>NUCLEOTIDE SEQUENCE [MRNA] (ISOFORM 1)</scope>
    <scope>TISSUE SPECIFICITY</scope>
</reference>
<reference key="3">
    <citation type="journal article" date="1998" name="Genomics">
        <title>cDNA cloning and gene mapping of human homologs for Schizosaccharomyces pombe rad17, rad1, and hus1 and cloning of homologs from mouse, Caenorhabditis elegans, and Drosophila melanogaster.</title>
        <authorList>
            <person name="Dean F.B."/>
            <person name="Lian L."/>
            <person name="O'Donnell M."/>
        </authorList>
    </citation>
    <scope>NUCLEOTIDE SEQUENCE [MRNA] (ISOFORM 1)</scope>
</reference>
<reference key="4">
    <citation type="journal article" date="1998" name="J. Biol. Chem.">
        <title>A human homologue of the Schizosaccharomyces pombe rad1+ checkpoint gene encodes an exonuclease.</title>
        <authorList>
            <person name="Parker A.E."/>
            <person name="Van de Weyer I."/>
            <person name="Laus M.C."/>
            <person name="Oostveen I."/>
            <person name="Yon J."/>
            <person name="Verhasselt P."/>
            <person name="Luyten W.H.M.L."/>
        </authorList>
    </citation>
    <scope>NUCLEOTIDE SEQUENCE [MRNA] (ISOFORM 1)</scope>
    <scope>TISSUE SPECIFICITY</scope>
</reference>
<reference key="5">
    <citation type="journal article" date="1998" name="Nucleic Acids Res.">
        <title>HRAD1 and MRad1 encode mammalian homologues of the fission yeast rad1+ cell cycle checkpoint control gene.</title>
        <authorList>
            <person name="Udell C.M."/>
            <person name="Lee S.K."/>
            <person name="Davey S."/>
        </authorList>
    </citation>
    <scope>NUCLEOTIDE SEQUENCE [MRNA] (ISOFORM 1)</scope>
</reference>
<reference key="6">
    <citation type="submission" date="1998-04" db="EMBL/GenBank/DDBJ databases">
        <title>Identification and cloning of Hrad1, a human homolog of the SchizosaCCharomyces pombe checkpoint protein.</title>
        <authorList>
            <person name="Hao L."/>
            <person name="Chang M."/>
            <person name="Liu J."/>
            <person name="Chen L.B."/>
        </authorList>
    </citation>
    <scope>NUCLEOTIDE SEQUENCE [MRNA] (ISOFORM 1)</scope>
</reference>
<reference key="7">
    <citation type="submission" date="1998-08" db="EMBL/GenBank/DDBJ databases">
        <title>Mammalian REC1, encoding a 3'-5' exonuclease, is differentially expressed during meiosis.</title>
        <authorList>
            <person name="Shannon M.E."/>
            <person name="Naureckiene S."/>
            <person name="Stubbs L."/>
            <person name="Holloman W.K."/>
            <person name="Thelen M.P."/>
        </authorList>
    </citation>
    <scope>NUCLEOTIDE SEQUENCE [MRNA] (ISOFORM 1)</scope>
</reference>
<reference key="8">
    <citation type="journal article" date="2005" name="Science">
        <title>The transcriptional landscape of the mammalian genome.</title>
        <authorList>
            <person name="Carninci P."/>
            <person name="Kasukawa T."/>
            <person name="Katayama S."/>
            <person name="Gough J."/>
            <person name="Frith M.C."/>
            <person name="Maeda N."/>
            <person name="Oyama R."/>
            <person name="Ravasi T."/>
            <person name="Lenhard B."/>
            <person name="Wells C."/>
            <person name="Kodzius R."/>
            <person name="Shimokawa K."/>
            <person name="Bajic V.B."/>
            <person name="Brenner S.E."/>
            <person name="Batalov S."/>
            <person name="Forrest A.R."/>
            <person name="Zavolan M."/>
            <person name="Davis M.J."/>
            <person name="Wilming L.G."/>
            <person name="Aidinis V."/>
            <person name="Allen J.E."/>
            <person name="Ambesi-Impiombato A."/>
            <person name="Apweiler R."/>
            <person name="Aturaliya R.N."/>
            <person name="Bailey T.L."/>
            <person name="Bansal M."/>
            <person name="Baxter L."/>
            <person name="Beisel K.W."/>
            <person name="Bersano T."/>
            <person name="Bono H."/>
            <person name="Chalk A.M."/>
            <person name="Chiu K.P."/>
            <person name="Choudhary V."/>
            <person name="Christoffels A."/>
            <person name="Clutterbuck D.R."/>
            <person name="Crowe M.L."/>
            <person name="Dalla E."/>
            <person name="Dalrymple B.P."/>
            <person name="de Bono B."/>
            <person name="Della Gatta G."/>
            <person name="di Bernardo D."/>
            <person name="Down T."/>
            <person name="Engstrom P."/>
            <person name="Fagiolini M."/>
            <person name="Faulkner G."/>
            <person name="Fletcher C.F."/>
            <person name="Fukushima T."/>
            <person name="Furuno M."/>
            <person name="Futaki S."/>
            <person name="Gariboldi M."/>
            <person name="Georgii-Hemming P."/>
            <person name="Gingeras T.R."/>
            <person name="Gojobori T."/>
            <person name="Green R.E."/>
            <person name="Gustincich S."/>
            <person name="Harbers M."/>
            <person name="Hayashi Y."/>
            <person name="Hensch T.K."/>
            <person name="Hirokawa N."/>
            <person name="Hill D."/>
            <person name="Huminiecki L."/>
            <person name="Iacono M."/>
            <person name="Ikeo K."/>
            <person name="Iwama A."/>
            <person name="Ishikawa T."/>
            <person name="Jakt M."/>
            <person name="Kanapin A."/>
            <person name="Katoh M."/>
            <person name="Kawasawa Y."/>
            <person name="Kelso J."/>
            <person name="Kitamura H."/>
            <person name="Kitano H."/>
            <person name="Kollias G."/>
            <person name="Krishnan S.P."/>
            <person name="Kruger A."/>
            <person name="Kummerfeld S.K."/>
            <person name="Kurochkin I.V."/>
            <person name="Lareau L.F."/>
            <person name="Lazarevic D."/>
            <person name="Lipovich L."/>
            <person name="Liu J."/>
            <person name="Liuni S."/>
            <person name="McWilliam S."/>
            <person name="Madan Babu M."/>
            <person name="Madera M."/>
            <person name="Marchionni L."/>
            <person name="Matsuda H."/>
            <person name="Matsuzawa S."/>
            <person name="Miki H."/>
            <person name="Mignone F."/>
            <person name="Miyake S."/>
            <person name="Morris K."/>
            <person name="Mottagui-Tabar S."/>
            <person name="Mulder N."/>
            <person name="Nakano N."/>
            <person name="Nakauchi H."/>
            <person name="Ng P."/>
            <person name="Nilsson R."/>
            <person name="Nishiguchi S."/>
            <person name="Nishikawa S."/>
            <person name="Nori F."/>
            <person name="Ohara O."/>
            <person name="Okazaki Y."/>
            <person name="Orlando V."/>
            <person name="Pang K.C."/>
            <person name="Pavan W.J."/>
            <person name="Pavesi G."/>
            <person name="Pesole G."/>
            <person name="Petrovsky N."/>
            <person name="Piazza S."/>
            <person name="Reed J."/>
            <person name="Reid J.F."/>
            <person name="Ring B.Z."/>
            <person name="Ringwald M."/>
            <person name="Rost B."/>
            <person name="Ruan Y."/>
            <person name="Salzberg S.L."/>
            <person name="Sandelin A."/>
            <person name="Schneider C."/>
            <person name="Schoenbach C."/>
            <person name="Sekiguchi K."/>
            <person name="Semple C.A."/>
            <person name="Seno S."/>
            <person name="Sessa L."/>
            <person name="Sheng Y."/>
            <person name="Shibata Y."/>
            <person name="Shimada H."/>
            <person name="Shimada K."/>
            <person name="Silva D."/>
            <person name="Sinclair B."/>
            <person name="Sperling S."/>
            <person name="Stupka E."/>
            <person name="Sugiura K."/>
            <person name="Sultana R."/>
            <person name="Takenaka Y."/>
            <person name="Taki K."/>
            <person name="Tammoja K."/>
            <person name="Tan S.L."/>
            <person name="Tang S."/>
            <person name="Taylor M.S."/>
            <person name="Tegner J."/>
            <person name="Teichmann S.A."/>
            <person name="Ueda H.R."/>
            <person name="van Nimwegen E."/>
            <person name="Verardo R."/>
            <person name="Wei C.L."/>
            <person name="Yagi K."/>
            <person name="Yamanishi H."/>
            <person name="Zabarovsky E."/>
            <person name="Zhu S."/>
            <person name="Zimmer A."/>
            <person name="Hide W."/>
            <person name="Bult C."/>
            <person name="Grimmond S.M."/>
            <person name="Teasdale R.D."/>
            <person name="Liu E.T."/>
            <person name="Brusic V."/>
            <person name="Quackenbush J."/>
            <person name="Wahlestedt C."/>
            <person name="Mattick J.S."/>
            <person name="Hume D.A."/>
            <person name="Kai C."/>
            <person name="Sasaki D."/>
            <person name="Tomaru Y."/>
            <person name="Fukuda S."/>
            <person name="Kanamori-Katayama M."/>
            <person name="Suzuki M."/>
            <person name="Aoki J."/>
            <person name="Arakawa T."/>
            <person name="Iida J."/>
            <person name="Imamura K."/>
            <person name="Itoh M."/>
            <person name="Kato T."/>
            <person name="Kawaji H."/>
            <person name="Kawagashira N."/>
            <person name="Kawashima T."/>
            <person name="Kojima M."/>
            <person name="Kondo S."/>
            <person name="Konno H."/>
            <person name="Nakano K."/>
            <person name="Ninomiya N."/>
            <person name="Nishio T."/>
            <person name="Okada M."/>
            <person name="Plessy C."/>
            <person name="Shibata K."/>
            <person name="Shiraki T."/>
            <person name="Suzuki S."/>
            <person name="Tagami M."/>
            <person name="Waki K."/>
            <person name="Watahiki A."/>
            <person name="Okamura-Oho Y."/>
            <person name="Suzuki H."/>
            <person name="Kawai J."/>
            <person name="Hayashizaki Y."/>
        </authorList>
    </citation>
    <scope>NUCLEOTIDE SEQUENCE [LARGE SCALE MRNA] (ISOFORM 2)</scope>
    <source>
        <strain>C57BL/6J</strain>
        <tissue>Bone marrow</tissue>
        <tissue>Fetal kidney</tissue>
        <tissue>Heart</tissue>
    </source>
</reference>
<reference key="9">
    <citation type="journal article" date="2004" name="Genome Res.">
        <title>The status, quality, and expansion of the NIH full-length cDNA project: the Mammalian Gene Collection (MGC).</title>
        <authorList>
            <consortium name="The MGC Project Team"/>
        </authorList>
    </citation>
    <scope>NUCLEOTIDE SEQUENCE [LARGE SCALE MRNA] (ISOFORM 1)</scope>
    <source>
        <tissue>Limb</tissue>
    </source>
</reference>
<proteinExistence type="evidence at protein level"/>
<accession>Q9QWZ1</accession>
<accession>O70452</accession>
<accession>O88391</accession>
<accession>Q3TGU1</accession>
<accession>Q3UG66</accession>
<accession>Q9QWZ3</accession>
<comment type="function">
    <text evidence="1">Component of the 9-1-1 cell-cycle checkpoint response complex that plays a major role in DNA repair. The 9-1-1 complex is recruited to DNA lesion upon damage by the RAD17-replication factor C (RFC) clamp loader complex. Acts then as a sliding clamp platform on DNA for several proteins involved in long-patch base excision repair (LP-BER). The 9-1-1 complex stimulates DNA polymerase beta (POLB) activity by increasing its affinity for the 3'-OH end of the primer-template and stabilizes POLB to those sites where LP-BER proceeds; endonuclease FEN1 cleavage activity on substrates with double, nick, or gap flaps of distinct sequences and lengths; and DNA ligase I (LIG1) on long-patch base excision repair substrates. The 9-1-1 complex is necessary for the recruitment of RHNO1 to sites of double-stranded breaks (DSB) occurring during the S phase.</text>
</comment>
<comment type="subunit">
    <text evidence="1">Component of the toroidal 9-1-1 (RAD9-RAD1-HUS1) complex, composed of RAD9A, RAD1 and HUS1. The 9-1-1 complex associates with LIG1, POLB, FEN1, RAD17, HDAC1, RPA1 and RPA2. The 9-1-1 complex associates with the RAD17-RFC complex. RAD1 interacts with POLB, FEN1, HUS1, HUS1B, RAD9A and RAD9B. Interacts with DNAJC7. Interacts with RHNO1; interaction is direct.</text>
</comment>
<comment type="subcellular location">
    <subcellularLocation>
        <location evidence="1">Nucleus</location>
    </subcellularLocation>
</comment>
<comment type="alternative products">
    <event type="alternative splicing"/>
    <isoform>
        <id>Q9QWZ1-1</id>
        <name>1</name>
        <sequence type="displayed"/>
    </isoform>
    <isoform>
        <id>Q9QWZ1-2</id>
        <name>2</name>
        <sequence type="described" ref="VSP_017337"/>
    </isoform>
</comment>
<comment type="tissue specificity">
    <text evidence="2 3 4">Expressed in testis, uterus, bladder, spleen, ovaries, lung, brain and muscle (at protein level). Expressed in brain, testis, kidney, heart, liver and lung.</text>
</comment>
<comment type="similarity">
    <text evidence="6">Belongs to the rad1 family.</text>
</comment>
<gene>
    <name type="primary">Rad1</name>
    <name type="synonym">Rec1</name>
</gene>